<accession>Q3Z8J8</accession>
<proteinExistence type="inferred from homology"/>
<keyword id="KW-0963">Cytoplasm</keyword>
<keyword id="KW-0378">Hydrolase</keyword>
<keyword id="KW-0645">Protease</keyword>
<keyword id="KW-0720">Serine protease</keyword>
<reference key="1">
    <citation type="journal article" date="2005" name="Science">
        <title>Genome sequence of the PCE-dechlorinating bacterium Dehalococcoides ethenogenes.</title>
        <authorList>
            <person name="Seshadri R."/>
            <person name="Adrian L."/>
            <person name="Fouts D.E."/>
            <person name="Eisen J.A."/>
            <person name="Phillippy A.M."/>
            <person name="Methe B.A."/>
            <person name="Ward N.L."/>
            <person name="Nelson W.C."/>
            <person name="DeBoy R.T."/>
            <person name="Khouri H.M."/>
            <person name="Kolonay J.F."/>
            <person name="Dodson R.J."/>
            <person name="Daugherty S.C."/>
            <person name="Brinkac L.M."/>
            <person name="Sullivan S.A."/>
            <person name="Madupu R."/>
            <person name="Nelson K.E."/>
            <person name="Kang K.H."/>
            <person name="Impraim M."/>
            <person name="Tran K."/>
            <person name="Robinson J.M."/>
            <person name="Forberger H.A."/>
            <person name="Fraser C.M."/>
            <person name="Zinder S.H."/>
            <person name="Heidelberg J.F."/>
        </authorList>
    </citation>
    <scope>NUCLEOTIDE SEQUENCE [LARGE SCALE GENOMIC DNA]</scope>
    <source>
        <strain>ATCC BAA-2266 / KCTC 15142 / 195</strain>
    </source>
</reference>
<dbReference type="EC" id="3.4.21.92" evidence="1"/>
<dbReference type="EMBL" id="CP000027">
    <property type="protein sequence ID" value="AAW39987.1"/>
    <property type="molecule type" value="Genomic_DNA"/>
</dbReference>
<dbReference type="RefSeq" id="WP_010936452.1">
    <property type="nucleotide sequence ID" value="NC_002936.3"/>
</dbReference>
<dbReference type="SMR" id="Q3Z8J8"/>
<dbReference type="FunCoup" id="Q3Z8J8">
    <property type="interactions" value="318"/>
</dbReference>
<dbReference type="STRING" id="243164.DET0710"/>
<dbReference type="MEROPS" id="S14.001"/>
<dbReference type="GeneID" id="3229949"/>
<dbReference type="KEGG" id="det:DET0710"/>
<dbReference type="eggNOG" id="COG0740">
    <property type="taxonomic scope" value="Bacteria"/>
</dbReference>
<dbReference type="HOGENOM" id="CLU_058707_3_2_0"/>
<dbReference type="InParanoid" id="Q3Z8J8"/>
<dbReference type="Proteomes" id="UP000008289">
    <property type="component" value="Chromosome"/>
</dbReference>
<dbReference type="GO" id="GO:0005737">
    <property type="term" value="C:cytoplasm"/>
    <property type="evidence" value="ECO:0007669"/>
    <property type="project" value="UniProtKB-SubCell"/>
</dbReference>
<dbReference type="GO" id="GO:0009368">
    <property type="term" value="C:endopeptidase Clp complex"/>
    <property type="evidence" value="ECO:0007669"/>
    <property type="project" value="TreeGrafter"/>
</dbReference>
<dbReference type="GO" id="GO:0004176">
    <property type="term" value="F:ATP-dependent peptidase activity"/>
    <property type="evidence" value="ECO:0007669"/>
    <property type="project" value="InterPro"/>
</dbReference>
<dbReference type="GO" id="GO:0051117">
    <property type="term" value="F:ATPase binding"/>
    <property type="evidence" value="ECO:0007669"/>
    <property type="project" value="TreeGrafter"/>
</dbReference>
<dbReference type="GO" id="GO:0004252">
    <property type="term" value="F:serine-type endopeptidase activity"/>
    <property type="evidence" value="ECO:0007669"/>
    <property type="project" value="UniProtKB-UniRule"/>
</dbReference>
<dbReference type="GO" id="GO:0006515">
    <property type="term" value="P:protein quality control for misfolded or incompletely synthesized proteins"/>
    <property type="evidence" value="ECO:0007669"/>
    <property type="project" value="TreeGrafter"/>
</dbReference>
<dbReference type="CDD" id="cd07017">
    <property type="entry name" value="S14_ClpP_2"/>
    <property type="match status" value="1"/>
</dbReference>
<dbReference type="FunFam" id="3.90.226.10:FF:000001">
    <property type="entry name" value="ATP-dependent Clp protease proteolytic subunit"/>
    <property type="match status" value="1"/>
</dbReference>
<dbReference type="Gene3D" id="3.90.226.10">
    <property type="entry name" value="2-enoyl-CoA Hydratase, Chain A, domain 1"/>
    <property type="match status" value="1"/>
</dbReference>
<dbReference type="HAMAP" id="MF_00444">
    <property type="entry name" value="ClpP"/>
    <property type="match status" value="1"/>
</dbReference>
<dbReference type="InterPro" id="IPR001907">
    <property type="entry name" value="ClpP"/>
</dbReference>
<dbReference type="InterPro" id="IPR029045">
    <property type="entry name" value="ClpP/crotonase-like_dom_sf"/>
</dbReference>
<dbReference type="InterPro" id="IPR023562">
    <property type="entry name" value="ClpP/TepA"/>
</dbReference>
<dbReference type="InterPro" id="IPR018215">
    <property type="entry name" value="ClpP_Ser_AS"/>
</dbReference>
<dbReference type="NCBIfam" id="NF001368">
    <property type="entry name" value="PRK00277.1"/>
    <property type="match status" value="1"/>
</dbReference>
<dbReference type="NCBIfam" id="NF009205">
    <property type="entry name" value="PRK12553.1"/>
    <property type="match status" value="1"/>
</dbReference>
<dbReference type="PANTHER" id="PTHR10381">
    <property type="entry name" value="ATP-DEPENDENT CLP PROTEASE PROTEOLYTIC SUBUNIT"/>
    <property type="match status" value="1"/>
</dbReference>
<dbReference type="PANTHER" id="PTHR10381:SF70">
    <property type="entry name" value="ATP-DEPENDENT CLP PROTEASE PROTEOLYTIC SUBUNIT"/>
    <property type="match status" value="1"/>
</dbReference>
<dbReference type="Pfam" id="PF00574">
    <property type="entry name" value="CLP_protease"/>
    <property type="match status" value="1"/>
</dbReference>
<dbReference type="PRINTS" id="PR00127">
    <property type="entry name" value="CLPPROTEASEP"/>
</dbReference>
<dbReference type="SUPFAM" id="SSF52096">
    <property type="entry name" value="ClpP/crotonase"/>
    <property type="match status" value="1"/>
</dbReference>
<dbReference type="PROSITE" id="PS00381">
    <property type="entry name" value="CLP_PROTEASE_SER"/>
    <property type="match status" value="1"/>
</dbReference>
<gene>
    <name evidence="1" type="primary">clpP</name>
    <name type="ordered locus">DET0710</name>
</gene>
<comment type="function">
    <text evidence="1">Cleaves peptides in various proteins in a process that requires ATP hydrolysis. Has a chymotrypsin-like activity. Plays a major role in the degradation of misfolded proteins.</text>
</comment>
<comment type="catalytic activity">
    <reaction evidence="1">
        <text>Hydrolysis of proteins to small peptides in the presence of ATP and magnesium. alpha-casein is the usual test substrate. In the absence of ATP, only oligopeptides shorter than five residues are hydrolyzed (such as succinyl-Leu-Tyr-|-NHMec, and Leu-Tyr-Leu-|-Tyr-Trp, in which cleavage of the -Tyr-|-Leu- and -Tyr-|-Trp bonds also occurs).</text>
        <dbReference type="EC" id="3.4.21.92"/>
    </reaction>
</comment>
<comment type="subunit">
    <text evidence="1">Fourteen ClpP subunits assemble into 2 heptameric rings which stack back to back to give a disk-like structure with a central cavity, resembling the structure of eukaryotic proteasomes.</text>
</comment>
<comment type="subcellular location">
    <subcellularLocation>
        <location evidence="1">Cytoplasm</location>
    </subcellularLocation>
</comment>
<comment type="similarity">
    <text evidence="1">Belongs to the peptidase S14 family.</text>
</comment>
<feature type="chain" id="PRO_0000226444" description="ATP-dependent Clp protease proteolytic subunit">
    <location>
        <begin position="1"/>
        <end position="200"/>
    </location>
</feature>
<feature type="active site" description="Nucleophile" evidence="1">
    <location>
        <position position="102"/>
    </location>
</feature>
<feature type="active site" evidence="1">
    <location>
        <position position="127"/>
    </location>
</feature>
<protein>
    <recommendedName>
        <fullName evidence="1">ATP-dependent Clp protease proteolytic subunit</fullName>
        <ecNumber evidence="1">3.4.21.92</ecNumber>
    </recommendedName>
    <alternativeName>
        <fullName evidence="1">Endopeptidase Clp</fullName>
    </alternativeName>
</protein>
<organism>
    <name type="scientific">Dehalococcoides mccartyi (strain ATCC BAA-2266 / KCTC 15142 / 195)</name>
    <name type="common">Dehalococcoides ethenogenes (strain 195)</name>
    <dbReference type="NCBI Taxonomy" id="243164"/>
    <lineage>
        <taxon>Bacteria</taxon>
        <taxon>Bacillati</taxon>
        <taxon>Chloroflexota</taxon>
        <taxon>Dehalococcoidia</taxon>
        <taxon>Dehalococcoidales</taxon>
        <taxon>Dehalococcoidaceae</taxon>
        <taxon>Dehalococcoides</taxon>
    </lineage>
</organism>
<name>CLPP_DEHM1</name>
<evidence type="ECO:0000255" key="1">
    <source>
        <dbReference type="HAMAP-Rule" id="MF_00444"/>
    </source>
</evidence>
<sequence>MISPENVVPMVIESSARGERAFDIYSLLLKERIIFLGSQINDQVANLVIAQLLFLDREDPDKDISLYIHSPGGVISAGLAMYDTMQLIRPKVSTICVGVAASMATVLLCAGAKGKRYALPNATIHMHQAMGGAQGQASDIEIAAREIMRQQDILRNILVKHTGQPMEKIIHDSDRDYYLNAQQAVEYGLIDEILQKPENK</sequence>